<evidence type="ECO:0000250" key="1">
    <source>
        <dbReference type="UniProtKB" id="P01137"/>
    </source>
</evidence>
<evidence type="ECO:0000250" key="2">
    <source>
        <dbReference type="UniProtKB" id="P04202"/>
    </source>
</evidence>
<evidence type="ECO:0000250" key="3">
    <source>
        <dbReference type="UniProtKB" id="P61812"/>
    </source>
</evidence>
<evidence type="ECO:0000255" key="4"/>
<evidence type="ECO:0000305" key="5"/>
<evidence type="ECO:0000305" key="6">
    <source>
    </source>
</evidence>
<comment type="function">
    <molecule>Transforming growth factor beta-2 proprotein</molecule>
    <text evidence="1 2">Precursor of the Latency-associated peptide (LAP) and Transforming growth factor beta-2 (TGF-beta-2) chains, which constitute the regulatory and active subunit of TGF-beta-2, respectively.</text>
</comment>
<comment type="function">
    <molecule>Latency-associated peptide</molecule>
    <text evidence="1 2">Required to maintain the Transforming growth factor beta-2 (TGF-beta-2) chain in a latent state during storage in extracellular matrix. Associates non-covalently with TGF-beta-2 and regulates its activation via interaction with 'milieu molecules', such as ltbp1 and lrrc32/garp, that control activation of TGF-beta-2.</text>
</comment>
<comment type="function">
    <molecule>Transforming growth factor beta-2</molecule>
    <text evidence="1 2 3">Multifunctional protein that regulates various processes such as angiogenesis and heart development (By similarity). Activation into mature form follows different steps: following cleavage of the proprotein in the Golgi apparatus, Latency-associated peptide (LAP) and Transforming growth factor beta-2 (TGF-beta-2) chains remain non-covalently linked rendering TGF-beta-2 inactive during storage in extracellular matrix (By similarity). At the same time, LAP chain interacts with 'milieu molecules', such as ltbp1 and lrrc32/garp, that control activation of TGF-beta-2 and maintain it in a latent state during storage in extracellular milieus (By similarity). Once activated following release of LAP, TGF-beta-2 acts by binding to TGF-beta receptors (tgfbr1 and tgfbr2), which transduce signal (By similarity).</text>
</comment>
<comment type="subunit">
    <molecule>Latency-associated peptide</molecule>
    <text evidence="1 3">Interacts with Transforming growth factor beta-2 (TGF-beta-2) chain; interaction is non-covalent and maintains (TGF-beta-2) in a latent state (By similarity).</text>
</comment>
<comment type="subunit">
    <molecule>Transforming growth factor beta-2</molecule>
    <text evidence="1 3">Homodimer; disulfide-linked (By similarity). Interacts with TGF-beta receptors (tgfbr1 and tgfbr2), leading to signal transduction (By similarity).</text>
</comment>
<comment type="subcellular location">
    <molecule>Latency-associated peptide</molecule>
    <subcellularLocation>
        <location evidence="1">Secreted</location>
        <location evidence="1">Extracellular space</location>
        <location evidence="1">Extracellular matrix</location>
    </subcellularLocation>
</comment>
<comment type="subcellular location">
    <molecule>Transforming growth factor beta-2</molecule>
    <subcellularLocation>
        <location evidence="1">Secreted</location>
    </subcellularLocation>
</comment>
<comment type="PTM">
    <molecule>Transforming growth factor beta-2</molecule>
    <text evidence="1">The precursor proprotein is cleaved in the Golgi apparatus to form Transforming growth factor beta-2 (TGF-beta-2) and Latency-associated peptide (LAP) chains, which remain non-covalently linked, rendering TGF-beta-2 inactive.</text>
</comment>
<comment type="similarity">
    <text evidence="5">Belongs to the TGF-beta family.</text>
</comment>
<comment type="sequence caution" evidence="5">
    <conflict type="erroneous initiation">
        <sequence resource="EMBL-CDS" id="CAA36117"/>
    </conflict>
</comment>
<reference key="1">
    <citation type="journal article" date="1990" name="Nucleic Acids Res.">
        <title>The sequence of TGF-beta 2 from Xenopus laevis.</title>
        <authorList>
            <person name="Rebbert M.L."/>
            <person name="Bhatia-Dey N."/>
            <person name="Dawid I.B."/>
        </authorList>
    </citation>
    <scope>NUCLEOTIDE SEQUENCE [MRNA]</scope>
</reference>
<reference key="2">
    <citation type="journal article" date="1990" name="Growth Factors">
        <title>Isolation and characterization of TGF-beta 2 and TGF-beta 5 from medium conditioned by Xenopus XTC cells.</title>
        <authorList>
            <person name="Roberts A.B."/>
            <person name="Rosa F."/>
            <person name="Roche N.S."/>
            <person name="Coligan J.E."/>
            <person name="Garfield M."/>
            <person name="Rebbert M.L."/>
            <person name="Kondaiah P."/>
            <person name="Danielpour D."/>
            <person name="Kehrl J.H."/>
            <person name="Wahl S.M."/>
            <person name="Dawid I.B."/>
            <person name="Sporn M.B."/>
        </authorList>
    </citation>
    <scope>PROTEIN SEQUENCE OF 302-319</scope>
</reference>
<proteinExistence type="evidence at protein level"/>
<accession>P17247</accession>
<dbReference type="EMBL" id="X51817">
    <property type="protein sequence ID" value="CAA36116.1"/>
    <property type="molecule type" value="mRNA"/>
</dbReference>
<dbReference type="EMBL" id="X51817">
    <property type="protein sequence ID" value="CAA36117.1"/>
    <property type="status" value="ALT_INIT"/>
    <property type="molecule type" value="mRNA"/>
</dbReference>
<dbReference type="PIR" id="S09510">
    <property type="entry name" value="WFXLB2"/>
</dbReference>
<dbReference type="RefSeq" id="NP_001079195.1">
    <property type="nucleotide sequence ID" value="NM_001085726.1"/>
</dbReference>
<dbReference type="SMR" id="P17247"/>
<dbReference type="GlyCosmos" id="P17247">
    <property type="glycosylation" value="3 sites, No reported glycans"/>
</dbReference>
<dbReference type="GeneID" id="373801"/>
<dbReference type="KEGG" id="xla:373801"/>
<dbReference type="AGR" id="Xenbase:XB-GENE-865387"/>
<dbReference type="CTD" id="373801"/>
<dbReference type="Xenbase" id="XB-GENE-865387">
    <property type="gene designation" value="tgfb2.L"/>
</dbReference>
<dbReference type="OMA" id="NCCLRPF"/>
<dbReference type="OrthoDB" id="6092228at2759"/>
<dbReference type="Proteomes" id="UP000186698">
    <property type="component" value="Chromosome 5L"/>
</dbReference>
<dbReference type="Bgee" id="373801">
    <property type="expression patterns" value="Expressed in internal ear and 13 other cell types or tissues"/>
</dbReference>
<dbReference type="GO" id="GO:0005615">
    <property type="term" value="C:extracellular space"/>
    <property type="evidence" value="ECO:0000318"/>
    <property type="project" value="GO_Central"/>
</dbReference>
<dbReference type="GO" id="GO:0005125">
    <property type="term" value="F:cytokine activity"/>
    <property type="evidence" value="ECO:0000318"/>
    <property type="project" value="GO_Central"/>
</dbReference>
<dbReference type="GO" id="GO:0008083">
    <property type="term" value="F:growth factor activity"/>
    <property type="evidence" value="ECO:0007669"/>
    <property type="project" value="UniProtKB-KW"/>
</dbReference>
<dbReference type="GO" id="GO:0005160">
    <property type="term" value="F:transforming growth factor beta receptor binding"/>
    <property type="evidence" value="ECO:0007669"/>
    <property type="project" value="InterPro"/>
</dbReference>
<dbReference type="GO" id="GO:0009653">
    <property type="term" value="P:anatomical structure morphogenesis"/>
    <property type="evidence" value="ECO:0007669"/>
    <property type="project" value="UniProtKB-ARBA"/>
</dbReference>
<dbReference type="GO" id="GO:0051781">
    <property type="term" value="P:positive regulation of cell division"/>
    <property type="evidence" value="ECO:0007669"/>
    <property type="project" value="UniProtKB-KW"/>
</dbReference>
<dbReference type="GO" id="GO:0042127">
    <property type="term" value="P:regulation of cell population proliferation"/>
    <property type="evidence" value="ECO:0000318"/>
    <property type="project" value="GO_Central"/>
</dbReference>
<dbReference type="GO" id="GO:0009888">
    <property type="term" value="P:tissue development"/>
    <property type="evidence" value="ECO:0007669"/>
    <property type="project" value="UniProtKB-ARBA"/>
</dbReference>
<dbReference type="GO" id="GO:0007179">
    <property type="term" value="P:transforming growth factor beta receptor signaling pathway"/>
    <property type="evidence" value="ECO:0000318"/>
    <property type="project" value="GO_Central"/>
</dbReference>
<dbReference type="CDD" id="cd19385">
    <property type="entry name" value="TGF_beta_TGFB2"/>
    <property type="match status" value="1"/>
</dbReference>
<dbReference type="FunFam" id="2.10.90.10:FF:000004">
    <property type="entry name" value="Transforming growth factor beta"/>
    <property type="match status" value="1"/>
</dbReference>
<dbReference type="FunFam" id="2.60.120.970:FF:000002">
    <property type="entry name" value="Transforming growth factor beta"/>
    <property type="match status" value="1"/>
</dbReference>
<dbReference type="Gene3D" id="2.60.120.970">
    <property type="match status" value="1"/>
</dbReference>
<dbReference type="Gene3D" id="2.10.90.10">
    <property type="entry name" value="Cystine-knot cytokines"/>
    <property type="match status" value="1"/>
</dbReference>
<dbReference type="InterPro" id="IPR029034">
    <property type="entry name" value="Cystine-knot_cytokine"/>
</dbReference>
<dbReference type="InterPro" id="IPR001839">
    <property type="entry name" value="TGF-b_C"/>
</dbReference>
<dbReference type="InterPro" id="IPR001111">
    <property type="entry name" value="TGF-b_propeptide"/>
</dbReference>
<dbReference type="InterPro" id="IPR016319">
    <property type="entry name" value="TGF-beta"/>
</dbReference>
<dbReference type="InterPro" id="IPR015615">
    <property type="entry name" value="TGF-beta-rel"/>
</dbReference>
<dbReference type="InterPro" id="IPR003940">
    <property type="entry name" value="TGFb2"/>
</dbReference>
<dbReference type="InterPro" id="IPR017948">
    <property type="entry name" value="TGFb_CS"/>
</dbReference>
<dbReference type="PANTHER" id="PTHR11848">
    <property type="entry name" value="TGF-BETA FAMILY"/>
    <property type="match status" value="1"/>
</dbReference>
<dbReference type="PANTHER" id="PTHR11848:SF141">
    <property type="entry name" value="TRANSFORMING GROWTH FACTOR BETA-2 PROPROTEIN"/>
    <property type="match status" value="1"/>
</dbReference>
<dbReference type="Pfam" id="PF00019">
    <property type="entry name" value="TGF_beta"/>
    <property type="match status" value="1"/>
</dbReference>
<dbReference type="Pfam" id="PF00688">
    <property type="entry name" value="TGFb_propeptide"/>
    <property type="match status" value="1"/>
</dbReference>
<dbReference type="PIRSF" id="PIRSF001787">
    <property type="entry name" value="TGF-beta"/>
    <property type="match status" value="1"/>
</dbReference>
<dbReference type="PRINTS" id="PR01423">
    <property type="entry name" value="TGFBETA"/>
</dbReference>
<dbReference type="PRINTS" id="PR01425">
    <property type="entry name" value="TGFBETA2"/>
</dbReference>
<dbReference type="SMART" id="SM00204">
    <property type="entry name" value="TGFB"/>
    <property type="match status" value="1"/>
</dbReference>
<dbReference type="SUPFAM" id="SSF57501">
    <property type="entry name" value="Cystine-knot cytokines"/>
    <property type="match status" value="1"/>
</dbReference>
<dbReference type="PROSITE" id="PS00250">
    <property type="entry name" value="TGF_BETA_1"/>
    <property type="match status" value="1"/>
</dbReference>
<dbReference type="PROSITE" id="PS51362">
    <property type="entry name" value="TGF_BETA_2"/>
    <property type="match status" value="1"/>
</dbReference>
<feature type="signal peptide" evidence="4">
    <location>
        <begin position="1"/>
        <end position="19"/>
    </location>
</feature>
<feature type="chain" id="PRO_0000456186" description="Transforming growth factor beta-2 proprotein">
    <location>
        <begin position="20"/>
        <end position="413"/>
    </location>
</feature>
<feature type="chain" id="PRO_0000445554" description="Latency-associated peptide" evidence="6">
    <location>
        <begin position="20"/>
        <end position="301"/>
    </location>
</feature>
<feature type="chain" id="PRO_0000033795" description="Transforming growth factor beta-2" evidence="6">
    <location>
        <begin position="302"/>
        <end position="413"/>
    </location>
</feature>
<feature type="glycosylation site" description="N-linked (GlcNAc...) asparagine" evidence="4">
    <location>
        <position position="72"/>
    </location>
</feature>
<feature type="glycosylation site" description="N-linked (GlcNAc...) asparagine" evidence="4">
    <location>
        <position position="140"/>
    </location>
</feature>
<feature type="glycosylation site" description="N-linked (GlcNAc...) asparagine" evidence="4">
    <location>
        <position position="241"/>
    </location>
</feature>
<feature type="disulfide bond" evidence="3">
    <location>
        <begin position="308"/>
        <end position="317"/>
    </location>
</feature>
<feature type="disulfide bond" evidence="3">
    <location>
        <begin position="316"/>
        <end position="379"/>
    </location>
</feature>
<feature type="disulfide bond" evidence="3">
    <location>
        <begin position="345"/>
        <end position="410"/>
    </location>
</feature>
<feature type="disulfide bond" evidence="3">
    <location>
        <begin position="349"/>
        <end position="412"/>
    </location>
</feature>
<feature type="disulfide bond" description="Interchain" evidence="3">
    <location>
        <position position="378"/>
    </location>
</feature>
<gene>
    <name type="primary">tgfb2</name>
</gene>
<keyword id="KW-0165">Cleavage on pair of basic residues</keyword>
<keyword id="KW-0903">Direct protein sequencing</keyword>
<keyword id="KW-1015">Disulfide bond</keyword>
<keyword id="KW-0272">Extracellular matrix</keyword>
<keyword id="KW-0325">Glycoprotein</keyword>
<keyword id="KW-0339">Growth factor</keyword>
<keyword id="KW-0497">Mitogen</keyword>
<keyword id="KW-1185">Reference proteome</keyword>
<keyword id="KW-0964">Secreted</keyword>
<keyword id="KW-0732">Signal</keyword>
<name>TGFB2_XENLA</name>
<protein>
    <recommendedName>
        <fullName>Transforming growth factor beta-2 proprotein</fullName>
    </recommendedName>
    <component>
        <recommendedName>
            <fullName>Latency-associated peptide</fullName>
            <shortName>LAP</shortName>
        </recommendedName>
    </component>
    <component>
        <recommendedName>
            <fullName>Transforming growth factor beta-2</fullName>
            <shortName>TGF-beta-2</shortName>
        </recommendedName>
    </component>
</protein>
<organism>
    <name type="scientific">Xenopus laevis</name>
    <name type="common">African clawed frog</name>
    <dbReference type="NCBI Taxonomy" id="8355"/>
    <lineage>
        <taxon>Eukaryota</taxon>
        <taxon>Metazoa</taxon>
        <taxon>Chordata</taxon>
        <taxon>Craniata</taxon>
        <taxon>Vertebrata</taxon>
        <taxon>Euteleostomi</taxon>
        <taxon>Amphibia</taxon>
        <taxon>Batrachia</taxon>
        <taxon>Anura</taxon>
        <taxon>Pipoidea</taxon>
        <taxon>Pipidae</taxon>
        <taxon>Xenopodinae</taxon>
        <taxon>Xenopus</taxon>
        <taxon>Xenopus</taxon>
    </lineage>
</organism>
<sequence>MHYYVLFTFLTLDLAPVALSLSTCSALDMDQFMRKRIEAIRGQILSKLKLNSPPEDYPEPGEVSQDVISIYNSTRDLLQEKANERATSCERERSEDEYYAKEVYKIDMLPYYTSENVIPPSYTTPYFRIVRFDVSSMEKNASNLVKAEFRVFRLMNTKARVSEQRIELYQILKSKDLASPTQRYIDSKVVKTRAEGEWLSFDVTEAVNEWLHHKDRNLGFKISLHCPCCTFIPSNNYIIPNKSEELETRFAGIDDAYMYAGGDSKSKTGRKKHTGRTPHLLLMLLPSYRLESQQSSRRKKRALDAAYCFRNVQDNCCLRPLYIDFKKDLGWKWIHEPKGYNANFCAGACPYLWSSDTQHSRVLSLYNTINPEASASPCCVSQDLDSLTILYYIGNKPKIEQLSNMIVKSCKCS</sequence>